<evidence type="ECO:0000256" key="1">
    <source>
        <dbReference type="SAM" id="MobiDB-lite"/>
    </source>
</evidence>
<evidence type="ECO:0000269" key="2">
    <source>
    </source>
</evidence>
<evidence type="ECO:0000269" key="3">
    <source>
    </source>
</evidence>
<evidence type="ECO:0000303" key="4">
    <source>
    </source>
</evidence>
<evidence type="ECO:0000312" key="5">
    <source>
        <dbReference type="FlyBase" id="FBgn0002592"/>
    </source>
</evidence>
<accession>O97177</accession>
<accession>Q5S3Y0</accession>
<accession>Q5S3Y1</accession>
<accession>Q5S3Y3</accession>
<accession>Q5S456</accession>
<accession>Q5S480</accession>
<accession>Q5S4A4</accession>
<accession>Q5S4B6</accession>
<accession>Q5S4H6</accession>
<accession>Q5S4K0</accession>
<keyword id="KW-0217">Developmental protein</keyword>
<keyword id="KW-0221">Differentiation</keyword>
<keyword id="KW-0524">Neurogenesis</keyword>
<keyword id="KW-0914">Notch signaling pathway</keyword>
<keyword id="KW-1185">Reference proteome</keyword>
<sequence length="218" mass="24118">MYLDTKNLTASSTSALTAATASNSKSTRRMRNVWKPLSRLLKVGGKGRTAQATLAHPNNVDLNNTQQQQQQQQQELLIEDDTKSTPEESIHKYGLELRQLPEEEQVSLTQPPNTPTLISSVHVDKVSAQSCGNCQHGRNCQHRHHSSSNINSSSSSSNMNSSSATQLPSNLWDLQLPLQYISTDNGTFFWANTQDRVDDDLLHALLCQSFSQLPGTLC</sequence>
<proteinExistence type="evidence at transcript level"/>
<name>ESM2_DROME</name>
<protein>
    <recommendedName>
        <fullName evidence="4">Enhancer of split M2 protein</fullName>
        <shortName evidence="4">E(spl)m2</shortName>
    </recommendedName>
</protein>
<dbReference type="EMBL" id="AJ010168">
    <property type="protein sequence ID" value="CAB39174.1"/>
    <property type="molecule type" value="Genomic_DNA"/>
</dbReference>
<dbReference type="EMBL" id="AY779906">
    <property type="protein sequence ID" value="AAV59054.1"/>
    <property type="molecule type" value="Genomic_DNA"/>
</dbReference>
<dbReference type="EMBL" id="AY779907">
    <property type="protein sequence ID" value="AAV59066.1"/>
    <property type="molecule type" value="Genomic_DNA"/>
</dbReference>
<dbReference type="EMBL" id="AY779908">
    <property type="protein sequence ID" value="AAV59078.1"/>
    <property type="molecule type" value="Genomic_DNA"/>
</dbReference>
<dbReference type="EMBL" id="AY779909">
    <property type="protein sequence ID" value="AAV59090.1"/>
    <property type="molecule type" value="Genomic_DNA"/>
</dbReference>
<dbReference type="EMBL" id="AY779910">
    <property type="protein sequence ID" value="AAV59102.1"/>
    <property type="molecule type" value="Genomic_DNA"/>
</dbReference>
<dbReference type="EMBL" id="AY779911">
    <property type="protein sequence ID" value="AAV59114.1"/>
    <property type="molecule type" value="Genomic_DNA"/>
</dbReference>
<dbReference type="EMBL" id="AY779912">
    <property type="protein sequence ID" value="AAV59126.1"/>
    <property type="molecule type" value="Genomic_DNA"/>
</dbReference>
<dbReference type="EMBL" id="AY779913">
    <property type="protein sequence ID" value="AAV59138.1"/>
    <property type="molecule type" value="Genomic_DNA"/>
</dbReference>
<dbReference type="EMBL" id="AY779914">
    <property type="protein sequence ID" value="AAV59150.1"/>
    <property type="molecule type" value="Genomic_DNA"/>
</dbReference>
<dbReference type="EMBL" id="AY779915">
    <property type="protein sequence ID" value="AAV59162.1"/>
    <property type="molecule type" value="Genomic_DNA"/>
</dbReference>
<dbReference type="EMBL" id="AY779916">
    <property type="protein sequence ID" value="AAV59174.1"/>
    <property type="molecule type" value="Genomic_DNA"/>
</dbReference>
<dbReference type="EMBL" id="AY779917">
    <property type="protein sequence ID" value="AAV59186.1"/>
    <property type="molecule type" value="Genomic_DNA"/>
</dbReference>
<dbReference type="EMBL" id="AY779918">
    <property type="protein sequence ID" value="AAV59198.1"/>
    <property type="molecule type" value="Genomic_DNA"/>
</dbReference>
<dbReference type="EMBL" id="AY779919">
    <property type="protein sequence ID" value="AAV59210.1"/>
    <property type="molecule type" value="Genomic_DNA"/>
</dbReference>
<dbReference type="EMBL" id="AY779920">
    <property type="protein sequence ID" value="AAV59222.1"/>
    <property type="molecule type" value="Genomic_DNA"/>
</dbReference>
<dbReference type="EMBL" id="AY779921">
    <property type="protein sequence ID" value="AAV59234.1"/>
    <property type="molecule type" value="Genomic_DNA"/>
</dbReference>
<dbReference type="EMBL" id="AY779933">
    <property type="protein sequence ID" value="AAV59030.1"/>
    <property type="molecule type" value="Genomic_DNA"/>
</dbReference>
<dbReference type="EMBL" id="AY779934">
    <property type="protein sequence ID" value="AAV59031.1"/>
    <property type="molecule type" value="Genomic_DNA"/>
</dbReference>
<dbReference type="EMBL" id="AY779935">
    <property type="protein sequence ID" value="AAV59032.1"/>
    <property type="molecule type" value="Genomic_DNA"/>
</dbReference>
<dbReference type="EMBL" id="AY779936">
    <property type="protein sequence ID" value="AAV59033.1"/>
    <property type="molecule type" value="Genomic_DNA"/>
</dbReference>
<dbReference type="EMBL" id="AY779937">
    <property type="protein sequence ID" value="AAV59034.1"/>
    <property type="molecule type" value="Genomic_DNA"/>
</dbReference>
<dbReference type="EMBL" id="AY779938">
    <property type="protein sequence ID" value="AAV59035.1"/>
    <property type="molecule type" value="Genomic_DNA"/>
</dbReference>
<dbReference type="EMBL" id="AY779939">
    <property type="protein sequence ID" value="AAV59036.1"/>
    <property type="molecule type" value="Genomic_DNA"/>
</dbReference>
<dbReference type="EMBL" id="AY779940">
    <property type="protein sequence ID" value="AAV59037.1"/>
    <property type="molecule type" value="Genomic_DNA"/>
</dbReference>
<dbReference type="EMBL" id="AY779941">
    <property type="protein sequence ID" value="AAV59038.1"/>
    <property type="molecule type" value="Genomic_DNA"/>
</dbReference>
<dbReference type="EMBL" id="AY779942">
    <property type="protein sequence ID" value="AAV59039.1"/>
    <property type="molecule type" value="Genomic_DNA"/>
</dbReference>
<dbReference type="EMBL" id="AY779943">
    <property type="protein sequence ID" value="AAV59040.1"/>
    <property type="molecule type" value="Genomic_DNA"/>
</dbReference>
<dbReference type="EMBL" id="AY779944">
    <property type="protein sequence ID" value="AAV59041.1"/>
    <property type="molecule type" value="Genomic_DNA"/>
</dbReference>
<dbReference type="EMBL" id="AY779945">
    <property type="protein sequence ID" value="AAV59042.1"/>
    <property type="molecule type" value="Genomic_DNA"/>
</dbReference>
<dbReference type="EMBL" id="AY779946">
    <property type="protein sequence ID" value="AAV59043.1"/>
    <property type="molecule type" value="Genomic_DNA"/>
</dbReference>
<dbReference type="EMBL" id="AY779947">
    <property type="protein sequence ID" value="AAV59044.1"/>
    <property type="molecule type" value="Genomic_DNA"/>
</dbReference>
<dbReference type="EMBL" id="AE014297">
    <property type="protein sequence ID" value="AAF56549.1"/>
    <property type="molecule type" value="Genomic_DNA"/>
</dbReference>
<dbReference type="EMBL" id="AY071096">
    <property type="protein sequence ID" value="AAL48718.1"/>
    <property type="molecule type" value="mRNA"/>
</dbReference>
<dbReference type="RefSeq" id="NP_524508.1">
    <property type="nucleotide sequence ID" value="NM_079784.3"/>
</dbReference>
<dbReference type="STRING" id="7227.FBpp0084354"/>
<dbReference type="PaxDb" id="7227-FBpp0084354"/>
<dbReference type="DNASU" id="43155"/>
<dbReference type="EnsemblMetazoa" id="FBtr0084981">
    <property type="protein sequence ID" value="FBpp0084354"/>
    <property type="gene ID" value="FBgn0002592"/>
</dbReference>
<dbReference type="GeneID" id="43155"/>
<dbReference type="KEGG" id="dme:Dmel_CG6104"/>
<dbReference type="AGR" id="FB:FBgn0002592"/>
<dbReference type="CTD" id="43155"/>
<dbReference type="FlyBase" id="FBgn0002592">
    <property type="gene designation" value="E(spl)m2-BFM"/>
</dbReference>
<dbReference type="VEuPathDB" id="VectorBase:FBgn0002592"/>
<dbReference type="eggNOG" id="ENOG502T8HW">
    <property type="taxonomic scope" value="Eukaryota"/>
</dbReference>
<dbReference type="HOGENOM" id="CLU_1195934_0_0_1"/>
<dbReference type="InParanoid" id="O97177"/>
<dbReference type="OMA" id="QHGRNCQ"/>
<dbReference type="OrthoDB" id="7985510at2759"/>
<dbReference type="PhylomeDB" id="O97177"/>
<dbReference type="BioGRID-ORCS" id="43155">
    <property type="hits" value="0 hits in 1 CRISPR screen"/>
</dbReference>
<dbReference type="GenomeRNAi" id="43155"/>
<dbReference type="PRO" id="PR:O97177"/>
<dbReference type="Proteomes" id="UP000000803">
    <property type="component" value="Chromosome 3R"/>
</dbReference>
<dbReference type="Bgee" id="FBgn0002592">
    <property type="expression patterns" value="Expressed in eye disc (Drosophila) and 62 other cell types or tissues"/>
</dbReference>
<dbReference type="GO" id="GO:0001708">
    <property type="term" value="P:cell fate specification"/>
    <property type="evidence" value="ECO:0000315"/>
    <property type="project" value="FlyBase"/>
</dbReference>
<dbReference type="GO" id="GO:0007399">
    <property type="term" value="P:nervous system development"/>
    <property type="evidence" value="ECO:0007669"/>
    <property type="project" value="UniProtKB-KW"/>
</dbReference>
<dbReference type="GO" id="GO:0007219">
    <property type="term" value="P:Notch signaling pathway"/>
    <property type="evidence" value="ECO:0007669"/>
    <property type="project" value="UniProtKB-KW"/>
</dbReference>
<dbReference type="GO" id="GO:0045747">
    <property type="term" value="P:positive regulation of Notch signaling pathway"/>
    <property type="evidence" value="ECO:0000315"/>
    <property type="project" value="FlyBase"/>
</dbReference>
<dbReference type="GO" id="GO:0007423">
    <property type="term" value="P:sensory organ development"/>
    <property type="evidence" value="ECO:0000315"/>
    <property type="project" value="FlyBase"/>
</dbReference>
<dbReference type="InterPro" id="IPR029686">
    <property type="entry name" value="Malpha/m4/m2"/>
</dbReference>
<dbReference type="Pfam" id="PF15952">
    <property type="entry name" value="ESM4"/>
    <property type="match status" value="1"/>
</dbReference>
<gene>
    <name evidence="5" type="primary">E(spl)m2-BFM</name>
    <name evidence="4" type="synonym">m2</name>
    <name evidence="5" type="ORF">CG6104</name>
</gene>
<comment type="function">
    <text evidence="2">Part of the Notch signaling pathway.</text>
</comment>
<comment type="developmental stage">
    <text evidence="2">Expressed at the time when separation of neural and epidermal precursors cells occurs. Detected in the neuro-ectoderm of stage 9 embryos. At stage 10/11, accumulates at high levels in the presumptive mesoderm, however, it disappears quickly with the onset of germ band retraction. In eye disk, expression occurs close to, as well as posterior to the morphogenetic furrow. In the wing disk, found in the proneural clusters areas, the dorso-ventral boundary and vein/intervein regions.</text>
</comment>
<feature type="chain" id="PRO_0000087058" description="Enhancer of split M2 protein">
    <location>
        <begin position="1"/>
        <end position="218"/>
    </location>
</feature>
<feature type="region of interest" description="Disordered" evidence="1">
    <location>
        <begin position="1"/>
        <end position="30"/>
    </location>
</feature>
<feature type="region of interest" description="Disordered" evidence="1">
    <location>
        <begin position="64"/>
        <end position="86"/>
    </location>
</feature>
<feature type="region of interest" description="Disordered" evidence="1">
    <location>
        <begin position="137"/>
        <end position="164"/>
    </location>
</feature>
<feature type="compositionally biased region" description="Low complexity" evidence="1">
    <location>
        <begin position="1"/>
        <end position="25"/>
    </location>
</feature>
<feature type="compositionally biased region" description="Low complexity" evidence="1">
    <location>
        <begin position="147"/>
        <end position="163"/>
    </location>
</feature>
<feature type="sequence variant" description="In strain: NVIII-41." evidence="3">
    <original>S</original>
    <variation>T</variation>
    <location>
        <position position="12"/>
    </location>
</feature>
<feature type="sequence variant" description="In strain: NVIII-m11." evidence="3">
    <location>
        <position position="21"/>
    </location>
</feature>
<feature type="sequence variant" description="In strain: NVIII-9." evidence="3">
    <original>G</original>
    <variation>C</variation>
    <location>
        <position position="47"/>
    </location>
</feature>
<feature type="sequence variant" description="In strain: NVIII-m11.">
    <original>T</original>
    <variation>TQQQQ</variation>
    <location>
        <position position="65"/>
    </location>
</feature>
<feature type="sequence variant" description="In strain: NVIII-42 and NVIII-18." evidence="3">
    <location>
        <begin position="150"/>
        <end position="158"/>
    </location>
</feature>
<feature type="sequence variant" description="In strain: Madang_F12 and Madang_M22." evidence="3">
    <location>
        <begin position="150"/>
        <end position="153"/>
    </location>
</feature>
<feature type="sequence variant" description="In strain: NVIII-m13." evidence="3">
    <original>Q</original>
    <variation>E</variation>
    <location>
        <position position="212"/>
    </location>
</feature>
<feature type="sequence variant" description="In strain: NVIII-m11." evidence="3">
    <original>L</original>
    <variation>M</variation>
    <location>
        <position position="213"/>
    </location>
</feature>
<organism>
    <name type="scientific">Drosophila melanogaster</name>
    <name type="common">Fruit fly</name>
    <dbReference type="NCBI Taxonomy" id="7227"/>
    <lineage>
        <taxon>Eukaryota</taxon>
        <taxon>Metazoa</taxon>
        <taxon>Ecdysozoa</taxon>
        <taxon>Arthropoda</taxon>
        <taxon>Hexapoda</taxon>
        <taxon>Insecta</taxon>
        <taxon>Pterygota</taxon>
        <taxon>Neoptera</taxon>
        <taxon>Endopterygota</taxon>
        <taxon>Diptera</taxon>
        <taxon>Brachycera</taxon>
        <taxon>Muscomorpha</taxon>
        <taxon>Ephydroidea</taxon>
        <taxon>Drosophilidae</taxon>
        <taxon>Drosophila</taxon>
        <taxon>Sophophora</taxon>
    </lineage>
</organism>
<reference key="1">
    <citation type="journal article" date="1999" name="Mech. Dev.">
        <title>The Enhancer of split complex of Drosophila melanogaster harbors three classes of Notch responsive genes.</title>
        <authorList>
            <person name="Wurmbach E."/>
            <person name="Wech I."/>
            <person name="Preiss A."/>
        </authorList>
    </citation>
    <scope>NUCLEOTIDE SEQUENCE [GENOMIC DNA]</scope>
    <scope>FUNCTION</scope>
    <scope>DEVELOPMENTAL STAGE</scope>
    <source>
        <tissue>Embryo</tissue>
    </source>
</reference>
<reference key="2">
    <citation type="journal article" date="2005" name="Mol. Biol. Evol.">
        <title>Identifying signatures of selection at the enhancer of split neurogenic gene complex in Drosophila.</title>
        <authorList>
            <person name="Macdonald S.J."/>
            <person name="Long A.D."/>
        </authorList>
    </citation>
    <scope>NUCLEOTIDE SEQUENCE [GENOMIC DNA]</scope>
    <scope>VARIANTS THR-12; ALA-21 DEL; CYS-47; GLN-GLN-GLN-GLN-66 INS; 150-ILE--SER-153 DEL; 150-ILE--ASN-158 DEL; GLU-212 AND MET-213</scope>
    <source>
        <strain>Madang_F12</strain>
        <strain>Madang_F16</strain>
        <strain>Madang_F18</strain>
        <strain>Madang_F21</strain>
        <strain>Madang_F24</strain>
        <strain>Madang_F30</strain>
        <strain>Madang_F4</strain>
        <strain>Madang_F9</strain>
        <strain>Madang_M10</strain>
        <strain>Madang_M17</strain>
        <strain>Madang_M22</strain>
        <strain>Madang_M27</strain>
        <strain>Madang_M3</strain>
        <strain>Madang_M4</strain>
        <strain>Madang_M9</strain>
        <strain>NVIII-1</strain>
        <strain>NVIII-18</strain>
        <strain>NVIII-2</strain>
        <strain>NVIII-22</strain>
        <strain>NVIII-24</strain>
        <strain>NVIII-28</strain>
        <strain>NVIII-41</strain>
        <strain>NVIII-42</strain>
        <strain>NVIII-46</strain>
        <strain>NVIII-5</strain>
        <strain>NVIII-9</strain>
        <strain>NVIII-m11</strain>
        <strain>NVIII-m12</strain>
        <strain>NVIII-m13</strain>
        <strain>NVIII-m15</strain>
        <strain>NVIII-m19</strain>
    </source>
</reference>
<reference key="3">
    <citation type="journal article" date="2000" name="Science">
        <title>The genome sequence of Drosophila melanogaster.</title>
        <authorList>
            <person name="Adams M.D."/>
            <person name="Celniker S.E."/>
            <person name="Holt R.A."/>
            <person name="Evans C.A."/>
            <person name="Gocayne J.D."/>
            <person name="Amanatides P.G."/>
            <person name="Scherer S.E."/>
            <person name="Li P.W."/>
            <person name="Hoskins R.A."/>
            <person name="Galle R.F."/>
            <person name="George R.A."/>
            <person name="Lewis S.E."/>
            <person name="Richards S."/>
            <person name="Ashburner M."/>
            <person name="Henderson S.N."/>
            <person name="Sutton G.G."/>
            <person name="Wortman J.R."/>
            <person name="Yandell M.D."/>
            <person name="Zhang Q."/>
            <person name="Chen L.X."/>
            <person name="Brandon R.C."/>
            <person name="Rogers Y.-H.C."/>
            <person name="Blazej R.G."/>
            <person name="Champe M."/>
            <person name="Pfeiffer B.D."/>
            <person name="Wan K.H."/>
            <person name="Doyle C."/>
            <person name="Baxter E.G."/>
            <person name="Helt G."/>
            <person name="Nelson C.R."/>
            <person name="Miklos G.L.G."/>
            <person name="Abril J.F."/>
            <person name="Agbayani A."/>
            <person name="An H.-J."/>
            <person name="Andrews-Pfannkoch C."/>
            <person name="Baldwin D."/>
            <person name="Ballew R.M."/>
            <person name="Basu A."/>
            <person name="Baxendale J."/>
            <person name="Bayraktaroglu L."/>
            <person name="Beasley E.M."/>
            <person name="Beeson K.Y."/>
            <person name="Benos P.V."/>
            <person name="Berman B.P."/>
            <person name="Bhandari D."/>
            <person name="Bolshakov S."/>
            <person name="Borkova D."/>
            <person name="Botchan M.R."/>
            <person name="Bouck J."/>
            <person name="Brokstein P."/>
            <person name="Brottier P."/>
            <person name="Burtis K.C."/>
            <person name="Busam D.A."/>
            <person name="Butler H."/>
            <person name="Cadieu E."/>
            <person name="Center A."/>
            <person name="Chandra I."/>
            <person name="Cherry J.M."/>
            <person name="Cawley S."/>
            <person name="Dahlke C."/>
            <person name="Davenport L.B."/>
            <person name="Davies P."/>
            <person name="de Pablos B."/>
            <person name="Delcher A."/>
            <person name="Deng Z."/>
            <person name="Mays A.D."/>
            <person name="Dew I."/>
            <person name="Dietz S.M."/>
            <person name="Dodson K."/>
            <person name="Doup L.E."/>
            <person name="Downes M."/>
            <person name="Dugan-Rocha S."/>
            <person name="Dunkov B.C."/>
            <person name="Dunn P."/>
            <person name="Durbin K.J."/>
            <person name="Evangelista C.C."/>
            <person name="Ferraz C."/>
            <person name="Ferriera S."/>
            <person name="Fleischmann W."/>
            <person name="Fosler C."/>
            <person name="Gabrielian A.E."/>
            <person name="Garg N.S."/>
            <person name="Gelbart W.M."/>
            <person name="Glasser K."/>
            <person name="Glodek A."/>
            <person name="Gong F."/>
            <person name="Gorrell J.H."/>
            <person name="Gu Z."/>
            <person name="Guan P."/>
            <person name="Harris M."/>
            <person name="Harris N.L."/>
            <person name="Harvey D.A."/>
            <person name="Heiman T.J."/>
            <person name="Hernandez J.R."/>
            <person name="Houck J."/>
            <person name="Hostin D."/>
            <person name="Houston K.A."/>
            <person name="Howland T.J."/>
            <person name="Wei M.-H."/>
            <person name="Ibegwam C."/>
            <person name="Jalali M."/>
            <person name="Kalush F."/>
            <person name="Karpen G.H."/>
            <person name="Ke Z."/>
            <person name="Kennison J.A."/>
            <person name="Ketchum K.A."/>
            <person name="Kimmel B.E."/>
            <person name="Kodira C.D."/>
            <person name="Kraft C.L."/>
            <person name="Kravitz S."/>
            <person name="Kulp D."/>
            <person name="Lai Z."/>
            <person name="Lasko P."/>
            <person name="Lei Y."/>
            <person name="Levitsky A.A."/>
            <person name="Li J.H."/>
            <person name="Li Z."/>
            <person name="Liang Y."/>
            <person name="Lin X."/>
            <person name="Liu X."/>
            <person name="Mattei B."/>
            <person name="McIntosh T.C."/>
            <person name="McLeod M.P."/>
            <person name="McPherson D."/>
            <person name="Merkulov G."/>
            <person name="Milshina N.V."/>
            <person name="Mobarry C."/>
            <person name="Morris J."/>
            <person name="Moshrefi A."/>
            <person name="Mount S.M."/>
            <person name="Moy M."/>
            <person name="Murphy B."/>
            <person name="Murphy L."/>
            <person name="Muzny D.M."/>
            <person name="Nelson D.L."/>
            <person name="Nelson D.R."/>
            <person name="Nelson K.A."/>
            <person name="Nixon K."/>
            <person name="Nusskern D.R."/>
            <person name="Pacleb J.M."/>
            <person name="Palazzolo M."/>
            <person name="Pittman G.S."/>
            <person name="Pan S."/>
            <person name="Pollard J."/>
            <person name="Puri V."/>
            <person name="Reese M.G."/>
            <person name="Reinert K."/>
            <person name="Remington K."/>
            <person name="Saunders R.D.C."/>
            <person name="Scheeler F."/>
            <person name="Shen H."/>
            <person name="Shue B.C."/>
            <person name="Siden-Kiamos I."/>
            <person name="Simpson M."/>
            <person name="Skupski M.P."/>
            <person name="Smith T.J."/>
            <person name="Spier E."/>
            <person name="Spradling A.C."/>
            <person name="Stapleton M."/>
            <person name="Strong R."/>
            <person name="Sun E."/>
            <person name="Svirskas R."/>
            <person name="Tector C."/>
            <person name="Turner R."/>
            <person name="Venter E."/>
            <person name="Wang A.H."/>
            <person name="Wang X."/>
            <person name="Wang Z.-Y."/>
            <person name="Wassarman D.A."/>
            <person name="Weinstock G.M."/>
            <person name="Weissenbach J."/>
            <person name="Williams S.M."/>
            <person name="Woodage T."/>
            <person name="Worley K.C."/>
            <person name="Wu D."/>
            <person name="Yang S."/>
            <person name="Yao Q.A."/>
            <person name="Ye J."/>
            <person name="Yeh R.-F."/>
            <person name="Zaveri J.S."/>
            <person name="Zhan M."/>
            <person name="Zhang G."/>
            <person name="Zhao Q."/>
            <person name="Zheng L."/>
            <person name="Zheng X.H."/>
            <person name="Zhong F.N."/>
            <person name="Zhong W."/>
            <person name="Zhou X."/>
            <person name="Zhu S.C."/>
            <person name="Zhu X."/>
            <person name="Smith H.O."/>
            <person name="Gibbs R.A."/>
            <person name="Myers E.W."/>
            <person name="Rubin G.M."/>
            <person name="Venter J.C."/>
        </authorList>
    </citation>
    <scope>NUCLEOTIDE SEQUENCE [LARGE SCALE GENOMIC DNA]</scope>
    <source>
        <strain>Berkeley</strain>
    </source>
</reference>
<reference key="4">
    <citation type="journal article" date="2002" name="Genome Biol.">
        <title>Annotation of the Drosophila melanogaster euchromatic genome: a systematic review.</title>
        <authorList>
            <person name="Misra S."/>
            <person name="Crosby M.A."/>
            <person name="Mungall C.J."/>
            <person name="Matthews B.B."/>
            <person name="Campbell K.S."/>
            <person name="Hradecky P."/>
            <person name="Huang Y."/>
            <person name="Kaminker J.S."/>
            <person name="Millburn G.H."/>
            <person name="Prochnik S.E."/>
            <person name="Smith C.D."/>
            <person name="Tupy J.L."/>
            <person name="Whitfield E.J."/>
            <person name="Bayraktaroglu L."/>
            <person name="Berman B.P."/>
            <person name="Bettencourt B.R."/>
            <person name="Celniker S.E."/>
            <person name="de Grey A.D.N.J."/>
            <person name="Drysdale R.A."/>
            <person name="Harris N.L."/>
            <person name="Richter J."/>
            <person name="Russo S."/>
            <person name="Schroeder A.J."/>
            <person name="Shu S.Q."/>
            <person name="Stapleton M."/>
            <person name="Yamada C."/>
            <person name="Ashburner M."/>
            <person name="Gelbart W.M."/>
            <person name="Rubin G.M."/>
            <person name="Lewis S.E."/>
        </authorList>
    </citation>
    <scope>GENOME REANNOTATION</scope>
    <source>
        <strain>Berkeley</strain>
    </source>
</reference>
<reference key="5">
    <citation type="journal article" date="2002" name="Genome Biol.">
        <title>A Drosophila full-length cDNA resource.</title>
        <authorList>
            <person name="Stapleton M."/>
            <person name="Carlson J.W."/>
            <person name="Brokstein P."/>
            <person name="Yu C."/>
            <person name="Champe M."/>
            <person name="George R.A."/>
            <person name="Guarin H."/>
            <person name="Kronmiller B."/>
            <person name="Pacleb J.M."/>
            <person name="Park S."/>
            <person name="Wan K.H."/>
            <person name="Rubin G.M."/>
            <person name="Celniker S.E."/>
        </authorList>
    </citation>
    <scope>NUCLEOTIDE SEQUENCE [LARGE SCALE MRNA]</scope>
    <source>
        <strain>Berkeley</strain>
        <tissue>Embryo</tissue>
    </source>
</reference>